<reference key="1">
    <citation type="journal article" date="1997" name="Yeast">
        <title>Sequencing analysis of a 36.8 kb fragment of yeast chromosome XV reveals 26 open reading frames including SEC63, CDC31, SUG2, GCD1, RBL2, PNT1, PAC1 and VPH1.</title>
        <authorList>
            <person name="Poirey R."/>
            <person name="Jauniaux J.-C."/>
        </authorList>
    </citation>
    <scope>NUCLEOTIDE SEQUENCE [GENOMIC DNA]</scope>
    <source>
        <strain>ATCC 96604 / S288c / FY1679</strain>
    </source>
</reference>
<reference key="2">
    <citation type="journal article" date="1997" name="Nature">
        <title>The nucleotide sequence of Saccharomyces cerevisiae chromosome XV.</title>
        <authorList>
            <person name="Dujon B."/>
            <person name="Albermann K."/>
            <person name="Aldea M."/>
            <person name="Alexandraki D."/>
            <person name="Ansorge W."/>
            <person name="Arino J."/>
            <person name="Benes V."/>
            <person name="Bohn C."/>
            <person name="Bolotin-Fukuhara M."/>
            <person name="Bordonne R."/>
            <person name="Boyer J."/>
            <person name="Camasses A."/>
            <person name="Casamayor A."/>
            <person name="Casas C."/>
            <person name="Cheret G."/>
            <person name="Cziepluch C."/>
            <person name="Daignan-Fornier B."/>
            <person name="Dang V.-D."/>
            <person name="de Haan M."/>
            <person name="Delius H."/>
            <person name="Durand P."/>
            <person name="Fairhead C."/>
            <person name="Feldmann H."/>
            <person name="Gaillon L."/>
            <person name="Galisson F."/>
            <person name="Gamo F.-J."/>
            <person name="Gancedo C."/>
            <person name="Goffeau A."/>
            <person name="Goulding S.E."/>
            <person name="Grivell L.A."/>
            <person name="Habbig B."/>
            <person name="Hand N.J."/>
            <person name="Hani J."/>
            <person name="Hattenhorst U."/>
            <person name="Hebling U."/>
            <person name="Hernando Y."/>
            <person name="Herrero E."/>
            <person name="Heumann K."/>
            <person name="Hiesel R."/>
            <person name="Hilger F."/>
            <person name="Hofmann B."/>
            <person name="Hollenberg C.P."/>
            <person name="Hughes B."/>
            <person name="Jauniaux J.-C."/>
            <person name="Kalogeropoulos A."/>
            <person name="Katsoulou C."/>
            <person name="Kordes E."/>
            <person name="Lafuente M.J."/>
            <person name="Landt O."/>
            <person name="Louis E.J."/>
            <person name="Maarse A.C."/>
            <person name="Madania A."/>
            <person name="Mannhaupt G."/>
            <person name="Marck C."/>
            <person name="Martin R.P."/>
            <person name="Mewes H.-W."/>
            <person name="Michaux G."/>
            <person name="Paces V."/>
            <person name="Parle-McDermott A.G."/>
            <person name="Pearson B.M."/>
            <person name="Perrin A."/>
            <person name="Pettersson B."/>
            <person name="Poch O."/>
            <person name="Pohl T.M."/>
            <person name="Poirey R."/>
            <person name="Portetelle D."/>
            <person name="Pujol A."/>
            <person name="Purnelle B."/>
            <person name="Ramezani Rad M."/>
            <person name="Rechmann S."/>
            <person name="Schwager C."/>
            <person name="Schweizer M."/>
            <person name="Sor F."/>
            <person name="Sterky F."/>
            <person name="Tarassov I.A."/>
            <person name="Teodoru C."/>
            <person name="Tettelin H."/>
            <person name="Thierry A."/>
            <person name="Tobiasch E."/>
            <person name="Tzermia M."/>
            <person name="Uhlen M."/>
            <person name="Unseld M."/>
            <person name="Valens M."/>
            <person name="Vandenbol M."/>
            <person name="Vetter I."/>
            <person name="Vlcek C."/>
            <person name="Voet M."/>
            <person name="Volckaert G."/>
            <person name="Voss H."/>
            <person name="Wambutt R."/>
            <person name="Wedler H."/>
            <person name="Wiemann S."/>
            <person name="Winsor B."/>
            <person name="Wolfe K.H."/>
            <person name="Zollner A."/>
            <person name="Zumstein E."/>
            <person name="Kleine K."/>
        </authorList>
    </citation>
    <scope>NUCLEOTIDE SEQUENCE [LARGE SCALE GENOMIC DNA]</scope>
    <source>
        <strain>ATCC 204508 / S288c</strain>
    </source>
</reference>
<reference key="3">
    <citation type="journal article" date="2014" name="G3 (Bethesda)">
        <title>The reference genome sequence of Saccharomyces cerevisiae: Then and now.</title>
        <authorList>
            <person name="Engel S.R."/>
            <person name="Dietrich F.S."/>
            <person name="Fisk D.G."/>
            <person name="Binkley G."/>
            <person name="Balakrishnan R."/>
            <person name="Costanzo M.C."/>
            <person name="Dwight S.S."/>
            <person name="Hitz B.C."/>
            <person name="Karra K."/>
            <person name="Nash R.S."/>
            <person name="Weng S."/>
            <person name="Wong E.D."/>
            <person name="Lloyd P."/>
            <person name="Skrzypek M.S."/>
            <person name="Miyasato S.R."/>
            <person name="Simison M."/>
            <person name="Cherry J.M."/>
        </authorList>
    </citation>
    <scope>GENOME REANNOTATION</scope>
    <source>
        <strain>ATCC 204508 / S288c</strain>
    </source>
</reference>
<name>YO263_YEAST</name>
<evidence type="ECO:0000305" key="1"/>
<evidence type="ECO:0000305" key="2">
    <source>
    </source>
</evidence>
<gene>
    <name type="ordered locus">YOR263C</name>
    <name type="ORF">O5370</name>
</gene>
<accession>Q08728</accession>
<feature type="chain" id="PRO_0000299730" description="Putative uncharacterized protein YOR263C">
    <location>
        <begin position="1"/>
        <end position="135"/>
    </location>
</feature>
<comment type="miscellaneous">
    <text evidence="1">Partially overlaps DSE3.</text>
</comment>
<comment type="caution">
    <text evidence="2">Product of a dubious gene prediction unlikely to encode a functional protein. Because of that it is not part of the S.cerevisiae S288c complete/reference proteome set.</text>
</comment>
<sequence>MSVNFFSLITSSWERGLFLKSCKNNSGTDSNRFFSFSVPPNLLDNLLPPLLVRKTLSSSSSKSCGIGGIYFKSSAVNVSEDGLTASTFFSILLPKNFLGITKLFCRIFLLSCPHNYKWFIHLINPFEYENFINIE</sequence>
<proteinExistence type="uncertain"/>
<dbReference type="EMBL" id="Z75171">
    <property type="protein sequence ID" value="CAA99485.1"/>
    <property type="molecule type" value="Genomic_DNA"/>
</dbReference>
<dbReference type="PIR" id="S67160">
    <property type="entry name" value="S67160"/>
</dbReference>
<dbReference type="DIP" id="DIP-5389N"/>
<dbReference type="PaxDb" id="4932-YOR263C"/>
<dbReference type="EnsemblFungi" id="YOR263C_mRNA">
    <property type="protein sequence ID" value="YOR263C"/>
    <property type="gene ID" value="YOR263C"/>
</dbReference>
<dbReference type="AGR" id="SGD:S000005789"/>
<dbReference type="SGD" id="S000005789">
    <property type="gene designation" value="YOR263C"/>
</dbReference>
<dbReference type="HOGENOM" id="CLU_1887368_0_0_1"/>
<organism>
    <name type="scientific">Saccharomyces cerevisiae (strain ATCC 204508 / S288c)</name>
    <name type="common">Baker's yeast</name>
    <dbReference type="NCBI Taxonomy" id="559292"/>
    <lineage>
        <taxon>Eukaryota</taxon>
        <taxon>Fungi</taxon>
        <taxon>Dikarya</taxon>
        <taxon>Ascomycota</taxon>
        <taxon>Saccharomycotina</taxon>
        <taxon>Saccharomycetes</taxon>
        <taxon>Saccharomycetales</taxon>
        <taxon>Saccharomycetaceae</taxon>
        <taxon>Saccharomyces</taxon>
    </lineage>
</organism>
<protein>
    <recommendedName>
        <fullName>Putative uncharacterized protein YOR263C</fullName>
    </recommendedName>
</protein>